<dbReference type="EC" id="2.7.1.11" evidence="1"/>
<dbReference type="EMBL" id="AE017221">
    <property type="protein sequence ID" value="AAS81939.1"/>
    <property type="molecule type" value="Genomic_DNA"/>
</dbReference>
<dbReference type="RefSeq" id="WP_011173968.1">
    <property type="nucleotide sequence ID" value="NC_005835.1"/>
</dbReference>
<dbReference type="SMR" id="Q72H98"/>
<dbReference type="GeneID" id="3169721"/>
<dbReference type="KEGG" id="tth:TT_C1597"/>
<dbReference type="eggNOG" id="COG0205">
    <property type="taxonomic scope" value="Bacteria"/>
</dbReference>
<dbReference type="HOGENOM" id="CLU_020655_0_1_0"/>
<dbReference type="OrthoDB" id="9802503at2"/>
<dbReference type="UniPathway" id="UPA00109">
    <property type="reaction ID" value="UER00182"/>
</dbReference>
<dbReference type="Proteomes" id="UP000000592">
    <property type="component" value="Chromosome"/>
</dbReference>
<dbReference type="GO" id="GO:0005945">
    <property type="term" value="C:6-phosphofructokinase complex"/>
    <property type="evidence" value="ECO:0007669"/>
    <property type="project" value="TreeGrafter"/>
</dbReference>
<dbReference type="GO" id="GO:0003872">
    <property type="term" value="F:6-phosphofructokinase activity"/>
    <property type="evidence" value="ECO:0007669"/>
    <property type="project" value="UniProtKB-UniRule"/>
</dbReference>
<dbReference type="GO" id="GO:0016208">
    <property type="term" value="F:AMP binding"/>
    <property type="evidence" value="ECO:0007669"/>
    <property type="project" value="TreeGrafter"/>
</dbReference>
<dbReference type="GO" id="GO:0005524">
    <property type="term" value="F:ATP binding"/>
    <property type="evidence" value="ECO:0007669"/>
    <property type="project" value="UniProtKB-KW"/>
</dbReference>
<dbReference type="GO" id="GO:0070095">
    <property type="term" value="F:fructose-6-phosphate binding"/>
    <property type="evidence" value="ECO:0007669"/>
    <property type="project" value="TreeGrafter"/>
</dbReference>
<dbReference type="GO" id="GO:0042802">
    <property type="term" value="F:identical protein binding"/>
    <property type="evidence" value="ECO:0007669"/>
    <property type="project" value="TreeGrafter"/>
</dbReference>
<dbReference type="GO" id="GO:0046872">
    <property type="term" value="F:metal ion binding"/>
    <property type="evidence" value="ECO:0007669"/>
    <property type="project" value="UniProtKB-KW"/>
</dbReference>
<dbReference type="GO" id="GO:0048029">
    <property type="term" value="F:monosaccharide binding"/>
    <property type="evidence" value="ECO:0007669"/>
    <property type="project" value="TreeGrafter"/>
</dbReference>
<dbReference type="GO" id="GO:0061621">
    <property type="term" value="P:canonical glycolysis"/>
    <property type="evidence" value="ECO:0007669"/>
    <property type="project" value="TreeGrafter"/>
</dbReference>
<dbReference type="GO" id="GO:0030388">
    <property type="term" value="P:fructose 1,6-bisphosphate metabolic process"/>
    <property type="evidence" value="ECO:0007669"/>
    <property type="project" value="TreeGrafter"/>
</dbReference>
<dbReference type="GO" id="GO:0006002">
    <property type="term" value="P:fructose 6-phosphate metabolic process"/>
    <property type="evidence" value="ECO:0007669"/>
    <property type="project" value="InterPro"/>
</dbReference>
<dbReference type="FunFam" id="3.40.50.450:FF:000001">
    <property type="entry name" value="ATP-dependent 6-phosphofructokinase"/>
    <property type="match status" value="1"/>
</dbReference>
<dbReference type="FunFam" id="3.40.50.460:FF:000002">
    <property type="entry name" value="ATP-dependent 6-phosphofructokinase"/>
    <property type="match status" value="1"/>
</dbReference>
<dbReference type="Gene3D" id="3.40.50.450">
    <property type="match status" value="1"/>
</dbReference>
<dbReference type="Gene3D" id="3.40.50.460">
    <property type="entry name" value="Phosphofructokinase domain"/>
    <property type="match status" value="1"/>
</dbReference>
<dbReference type="HAMAP" id="MF_00339">
    <property type="entry name" value="Phosphofructokinase_I_B1"/>
    <property type="match status" value="1"/>
</dbReference>
<dbReference type="InterPro" id="IPR022953">
    <property type="entry name" value="ATP_PFK"/>
</dbReference>
<dbReference type="InterPro" id="IPR012003">
    <property type="entry name" value="ATP_PFK_prok-type"/>
</dbReference>
<dbReference type="InterPro" id="IPR012828">
    <property type="entry name" value="PFKA_ATP_prok"/>
</dbReference>
<dbReference type="InterPro" id="IPR015912">
    <property type="entry name" value="Phosphofructokinase_CS"/>
</dbReference>
<dbReference type="InterPro" id="IPR000023">
    <property type="entry name" value="Phosphofructokinase_dom"/>
</dbReference>
<dbReference type="InterPro" id="IPR035966">
    <property type="entry name" value="PKF_sf"/>
</dbReference>
<dbReference type="NCBIfam" id="TIGR02482">
    <property type="entry name" value="PFKA_ATP"/>
    <property type="match status" value="1"/>
</dbReference>
<dbReference type="NCBIfam" id="NF002872">
    <property type="entry name" value="PRK03202.1"/>
    <property type="match status" value="1"/>
</dbReference>
<dbReference type="PANTHER" id="PTHR13697:SF4">
    <property type="entry name" value="ATP-DEPENDENT 6-PHOSPHOFRUCTOKINASE"/>
    <property type="match status" value="1"/>
</dbReference>
<dbReference type="PANTHER" id="PTHR13697">
    <property type="entry name" value="PHOSPHOFRUCTOKINASE"/>
    <property type="match status" value="1"/>
</dbReference>
<dbReference type="Pfam" id="PF00365">
    <property type="entry name" value="PFK"/>
    <property type="match status" value="1"/>
</dbReference>
<dbReference type="PIRSF" id="PIRSF000532">
    <property type="entry name" value="ATP_PFK_prok"/>
    <property type="match status" value="1"/>
</dbReference>
<dbReference type="PRINTS" id="PR00476">
    <property type="entry name" value="PHFRCTKINASE"/>
</dbReference>
<dbReference type="SUPFAM" id="SSF53784">
    <property type="entry name" value="Phosphofructokinase"/>
    <property type="match status" value="1"/>
</dbReference>
<dbReference type="PROSITE" id="PS00433">
    <property type="entry name" value="PHOSPHOFRUCTOKINASE"/>
    <property type="match status" value="1"/>
</dbReference>
<protein>
    <recommendedName>
        <fullName evidence="1">ATP-dependent 6-phosphofructokinase</fullName>
        <shortName evidence="1">ATP-PFK</shortName>
        <shortName evidence="1">Phosphofructokinase</shortName>
        <ecNumber evidence="1">2.7.1.11</ecNumber>
    </recommendedName>
    <alternativeName>
        <fullName evidence="1">Phosphohexokinase</fullName>
    </alternativeName>
</protein>
<sequence length="322" mass="33537">MKRIGVFTSGGDAPGMNAAIRAVVRQAHALGVEVIGIRRGYAGMIQGEMVPLGVRDVANIIQRGGTILLTARSQEFLTEEGRAKAYAKLQAAGIEGLVAIGGDGTFRGALCLVEEHGMPVVGVPGTIDNDLYGTDYTIGFDTAVNTALEAIDRIRDTAASHERVFFIEVMGRHAGFIALDVGLAGGAEVIAVPEEPVDPKAVAEVLEASQRRGKKSSIVVVAEGAYPGGAAGLLAAIREHLQVEARVTVLGHIQRGGSPTAKDRILASRLGAAAVEALVGGASGVMVGEVEGEVDLTPLKEAVERRKDINRALLRLSQVLAL</sequence>
<accession>Q72H98</accession>
<comment type="function">
    <text evidence="1">Catalyzes the phosphorylation of D-fructose 6-phosphate to fructose 1,6-bisphosphate by ATP, the first committing step of glycolysis.</text>
</comment>
<comment type="catalytic activity">
    <reaction evidence="1">
        <text>beta-D-fructose 6-phosphate + ATP = beta-D-fructose 1,6-bisphosphate + ADP + H(+)</text>
        <dbReference type="Rhea" id="RHEA:16109"/>
        <dbReference type="ChEBI" id="CHEBI:15378"/>
        <dbReference type="ChEBI" id="CHEBI:30616"/>
        <dbReference type="ChEBI" id="CHEBI:32966"/>
        <dbReference type="ChEBI" id="CHEBI:57634"/>
        <dbReference type="ChEBI" id="CHEBI:456216"/>
        <dbReference type="EC" id="2.7.1.11"/>
    </reaction>
</comment>
<comment type="cofactor">
    <cofactor evidence="1">
        <name>Mg(2+)</name>
        <dbReference type="ChEBI" id="CHEBI:18420"/>
    </cofactor>
</comment>
<comment type="activity regulation">
    <text evidence="1">Allosterically activated by ADP and other diphosphonucleosides, and allosterically inhibited by phosphoenolpyruvate.</text>
</comment>
<comment type="pathway">
    <text evidence="1">Carbohydrate degradation; glycolysis; D-glyceraldehyde 3-phosphate and glycerone phosphate from D-glucose: step 3/4.</text>
</comment>
<comment type="subunit">
    <text evidence="1">Homotetramer.</text>
</comment>
<comment type="subcellular location">
    <subcellularLocation>
        <location evidence="1">Cytoplasm</location>
    </subcellularLocation>
</comment>
<comment type="similarity">
    <text evidence="1">Belongs to the phosphofructokinase type A (PFKA) family. ATP-dependent PFK group I subfamily. Prokaryotic clade 'B1' sub-subfamily.</text>
</comment>
<name>PFKA_THET2</name>
<gene>
    <name evidence="1" type="primary">pfkA</name>
    <name type="ordered locus">TT_C1597</name>
</gene>
<feature type="chain" id="PRO_1000059806" description="ATP-dependent 6-phosphofructokinase">
    <location>
        <begin position="1"/>
        <end position="322"/>
    </location>
</feature>
<feature type="active site" description="Proton acceptor" evidence="1">
    <location>
        <position position="128"/>
    </location>
</feature>
<feature type="binding site" evidence="1">
    <location>
        <position position="11"/>
    </location>
    <ligand>
        <name>ATP</name>
        <dbReference type="ChEBI" id="CHEBI:30616"/>
    </ligand>
</feature>
<feature type="binding site" evidence="1">
    <location>
        <begin position="21"/>
        <end position="25"/>
    </location>
    <ligand>
        <name>ADP</name>
        <dbReference type="ChEBI" id="CHEBI:456216"/>
        <note>allosteric activator; ligand shared between dimeric partners</note>
    </ligand>
</feature>
<feature type="binding site" evidence="1">
    <location>
        <begin position="72"/>
        <end position="73"/>
    </location>
    <ligand>
        <name>ATP</name>
        <dbReference type="ChEBI" id="CHEBI:30616"/>
    </ligand>
</feature>
<feature type="binding site" evidence="1">
    <location>
        <begin position="102"/>
        <end position="105"/>
    </location>
    <ligand>
        <name>ATP</name>
        <dbReference type="ChEBI" id="CHEBI:30616"/>
    </ligand>
</feature>
<feature type="binding site" evidence="1">
    <location>
        <position position="103"/>
    </location>
    <ligand>
        <name>Mg(2+)</name>
        <dbReference type="ChEBI" id="CHEBI:18420"/>
        <note>catalytic</note>
    </ligand>
</feature>
<feature type="binding site" description="in other chain" evidence="1">
    <location>
        <begin position="126"/>
        <end position="128"/>
    </location>
    <ligand>
        <name>substrate</name>
        <note>ligand shared between dimeric partners</note>
    </ligand>
</feature>
<feature type="binding site" description="in other chain" evidence="1">
    <location>
        <position position="155"/>
    </location>
    <ligand>
        <name>ADP</name>
        <dbReference type="ChEBI" id="CHEBI:456216"/>
        <note>allosteric activator; ligand shared between dimeric partners</note>
    </ligand>
</feature>
<feature type="binding site" evidence="1">
    <location>
        <position position="163"/>
    </location>
    <ligand>
        <name>substrate</name>
        <note>ligand shared between dimeric partners</note>
    </ligand>
</feature>
<feature type="binding site" description="in other chain" evidence="1">
    <location>
        <begin position="170"/>
        <end position="172"/>
    </location>
    <ligand>
        <name>substrate</name>
        <note>ligand shared between dimeric partners</note>
    </ligand>
</feature>
<feature type="binding site" description="in other chain" evidence="1">
    <location>
        <begin position="186"/>
        <end position="188"/>
    </location>
    <ligand>
        <name>ADP</name>
        <dbReference type="ChEBI" id="CHEBI:456216"/>
        <note>allosteric activator; ligand shared between dimeric partners</note>
    </ligand>
</feature>
<feature type="binding site" description="in other chain" evidence="1">
    <location>
        <position position="212"/>
    </location>
    <ligand>
        <name>ADP</name>
        <dbReference type="ChEBI" id="CHEBI:456216"/>
        <note>allosteric activator; ligand shared between dimeric partners</note>
    </ligand>
</feature>
<feature type="binding site" description="in other chain" evidence="1">
    <location>
        <begin position="214"/>
        <end position="216"/>
    </location>
    <ligand>
        <name>ADP</name>
        <dbReference type="ChEBI" id="CHEBI:456216"/>
        <note>allosteric activator; ligand shared between dimeric partners</note>
    </ligand>
</feature>
<feature type="binding site" description="in other chain" evidence="1">
    <location>
        <position position="223"/>
    </location>
    <ligand>
        <name>substrate</name>
        <note>ligand shared between dimeric partners</note>
    </ligand>
</feature>
<feature type="binding site" evidence="1">
    <location>
        <position position="246"/>
    </location>
    <ligand>
        <name>substrate</name>
        <note>ligand shared between dimeric partners</note>
    </ligand>
</feature>
<feature type="binding site" description="in other chain" evidence="1">
    <location>
        <begin position="252"/>
        <end position="255"/>
    </location>
    <ligand>
        <name>substrate</name>
        <note>ligand shared between dimeric partners</note>
    </ligand>
</feature>
<keyword id="KW-0021">Allosteric enzyme</keyword>
<keyword id="KW-0067">ATP-binding</keyword>
<keyword id="KW-0963">Cytoplasm</keyword>
<keyword id="KW-0324">Glycolysis</keyword>
<keyword id="KW-0418">Kinase</keyword>
<keyword id="KW-0460">Magnesium</keyword>
<keyword id="KW-0479">Metal-binding</keyword>
<keyword id="KW-0547">Nucleotide-binding</keyword>
<keyword id="KW-0808">Transferase</keyword>
<proteinExistence type="inferred from homology"/>
<organism>
    <name type="scientific">Thermus thermophilus (strain ATCC BAA-163 / DSM 7039 / HB27)</name>
    <dbReference type="NCBI Taxonomy" id="262724"/>
    <lineage>
        <taxon>Bacteria</taxon>
        <taxon>Thermotogati</taxon>
        <taxon>Deinococcota</taxon>
        <taxon>Deinococci</taxon>
        <taxon>Thermales</taxon>
        <taxon>Thermaceae</taxon>
        <taxon>Thermus</taxon>
    </lineage>
</organism>
<reference key="1">
    <citation type="journal article" date="2004" name="Nat. Biotechnol.">
        <title>The genome sequence of the extreme thermophile Thermus thermophilus.</title>
        <authorList>
            <person name="Henne A."/>
            <person name="Brueggemann H."/>
            <person name="Raasch C."/>
            <person name="Wiezer A."/>
            <person name="Hartsch T."/>
            <person name="Liesegang H."/>
            <person name="Johann A."/>
            <person name="Lienard T."/>
            <person name="Gohl O."/>
            <person name="Martinez-Arias R."/>
            <person name="Jacobi C."/>
            <person name="Starkuviene V."/>
            <person name="Schlenczeck S."/>
            <person name="Dencker S."/>
            <person name="Huber R."/>
            <person name="Klenk H.-P."/>
            <person name="Kramer W."/>
            <person name="Merkl R."/>
            <person name="Gottschalk G."/>
            <person name="Fritz H.-J."/>
        </authorList>
    </citation>
    <scope>NUCLEOTIDE SEQUENCE [LARGE SCALE GENOMIC DNA]</scope>
    <source>
        <strain>ATCC BAA-163 / DSM 7039 / HB27</strain>
    </source>
</reference>
<evidence type="ECO:0000255" key="1">
    <source>
        <dbReference type="HAMAP-Rule" id="MF_00339"/>
    </source>
</evidence>